<evidence type="ECO:0000250" key="1"/>
<evidence type="ECO:0000255" key="2">
    <source>
        <dbReference type="PROSITE-ProRule" id="PRU00169"/>
    </source>
</evidence>
<evidence type="ECO:0000255" key="3">
    <source>
        <dbReference type="PROSITE-ProRule" id="PRU01091"/>
    </source>
</evidence>
<evidence type="ECO:0000305" key="4"/>
<accession>Q9K621</accession>
<feature type="chain" id="PRO_0000081030" description="Sensory transduction protein BceR">
    <location>
        <begin position="1"/>
        <end position="231"/>
    </location>
</feature>
<feature type="domain" description="Response regulatory" evidence="2">
    <location>
        <begin position="3"/>
        <end position="116"/>
    </location>
</feature>
<feature type="DNA-binding region" description="OmpR/PhoB-type" evidence="3">
    <location>
        <begin position="127"/>
        <end position="225"/>
    </location>
</feature>
<feature type="modified residue" description="4-aspartylphosphate" evidence="2">
    <location>
        <position position="52"/>
    </location>
</feature>
<gene>
    <name type="primary">bceR</name>
    <name type="ordered locus">BH3911</name>
</gene>
<sequence>MFKIMLIEDDHTLFSEIKERLSQWSYDVFGVSNFEKVIEEFTSLKPDLVIIDIQLPKFDGFHWCRMIRQHSNVPIIFLSSRDHPTDMVMSMQLGADDFIQKPFHFDVLVAKIQAILRRVHNYTSEQTQLKTWCGATIDYESNTVSNHVGSIELSKNEFFILKRLIERKNKIVTRDDLIRSLWEDERFISDNTLTVNVNRLRKRLDELGLGAYIETKVGQGYMAKEDGNTHD</sequence>
<proteinExistence type="inferred from homology"/>
<reference key="1">
    <citation type="journal article" date="2000" name="Nucleic Acids Res.">
        <title>Complete genome sequence of the alkaliphilic bacterium Bacillus halodurans and genomic sequence comparison with Bacillus subtilis.</title>
        <authorList>
            <person name="Takami H."/>
            <person name="Nakasone K."/>
            <person name="Takaki Y."/>
            <person name="Maeno G."/>
            <person name="Sasaki R."/>
            <person name="Masui N."/>
            <person name="Fuji F."/>
            <person name="Hirama C."/>
            <person name="Nakamura Y."/>
            <person name="Ogasawara N."/>
            <person name="Kuhara S."/>
            <person name="Horikoshi K."/>
        </authorList>
    </citation>
    <scope>NUCLEOTIDE SEQUENCE [LARGE SCALE GENOMIC DNA]</scope>
    <source>
        <strain>ATCC BAA-125 / DSM 18197 / FERM 7344 / JCM 9153 / C-125</strain>
    </source>
</reference>
<comment type="function">
    <text evidence="1">Member of the two-component regulatory system BceS/BceR involved in the regulation of bacitracin resistance. When activated by BceS, binds to the upstream region of the bceAB promoter and up-regulates the expression of these two genes (By similarity).</text>
</comment>
<comment type="subcellular location">
    <subcellularLocation>
        <location evidence="4">Cytoplasm</location>
    </subcellularLocation>
</comment>
<comment type="PTM">
    <text evidence="4">Phosphorylated by BceS.</text>
</comment>
<dbReference type="EMBL" id="BA000004">
    <property type="protein sequence ID" value="BAB07630.1"/>
    <property type="molecule type" value="Genomic_DNA"/>
</dbReference>
<dbReference type="PIR" id="G84138">
    <property type="entry name" value="G84138"/>
</dbReference>
<dbReference type="RefSeq" id="WP_010900036.1">
    <property type="nucleotide sequence ID" value="NC_002570.2"/>
</dbReference>
<dbReference type="SMR" id="Q9K621"/>
<dbReference type="STRING" id="272558.gene:10729824"/>
<dbReference type="KEGG" id="bha:BH3911"/>
<dbReference type="eggNOG" id="COG0745">
    <property type="taxonomic scope" value="Bacteria"/>
</dbReference>
<dbReference type="HOGENOM" id="CLU_000445_30_3_9"/>
<dbReference type="OrthoDB" id="9790442at2"/>
<dbReference type="Proteomes" id="UP000001258">
    <property type="component" value="Chromosome"/>
</dbReference>
<dbReference type="GO" id="GO:0005829">
    <property type="term" value="C:cytosol"/>
    <property type="evidence" value="ECO:0007669"/>
    <property type="project" value="TreeGrafter"/>
</dbReference>
<dbReference type="GO" id="GO:0032993">
    <property type="term" value="C:protein-DNA complex"/>
    <property type="evidence" value="ECO:0007669"/>
    <property type="project" value="TreeGrafter"/>
</dbReference>
<dbReference type="GO" id="GO:0000156">
    <property type="term" value="F:phosphorelay response regulator activity"/>
    <property type="evidence" value="ECO:0007669"/>
    <property type="project" value="TreeGrafter"/>
</dbReference>
<dbReference type="GO" id="GO:0000976">
    <property type="term" value="F:transcription cis-regulatory region binding"/>
    <property type="evidence" value="ECO:0007669"/>
    <property type="project" value="TreeGrafter"/>
</dbReference>
<dbReference type="GO" id="GO:0006355">
    <property type="term" value="P:regulation of DNA-templated transcription"/>
    <property type="evidence" value="ECO:0007669"/>
    <property type="project" value="InterPro"/>
</dbReference>
<dbReference type="CDD" id="cd18159">
    <property type="entry name" value="REC_OmpR_NsrR-like"/>
    <property type="match status" value="1"/>
</dbReference>
<dbReference type="CDD" id="cd00383">
    <property type="entry name" value="trans_reg_C"/>
    <property type="match status" value="1"/>
</dbReference>
<dbReference type="Gene3D" id="3.40.50.2300">
    <property type="match status" value="1"/>
</dbReference>
<dbReference type="Gene3D" id="1.10.10.10">
    <property type="entry name" value="Winged helix-like DNA-binding domain superfamily/Winged helix DNA-binding domain"/>
    <property type="match status" value="1"/>
</dbReference>
<dbReference type="InterPro" id="IPR011006">
    <property type="entry name" value="CheY-like_superfamily"/>
</dbReference>
<dbReference type="InterPro" id="IPR001867">
    <property type="entry name" value="OmpR/PhoB-type_DNA-bd"/>
</dbReference>
<dbReference type="InterPro" id="IPR016032">
    <property type="entry name" value="Sig_transdc_resp-reg_C-effctor"/>
</dbReference>
<dbReference type="InterPro" id="IPR001789">
    <property type="entry name" value="Sig_transdc_resp-reg_receiver"/>
</dbReference>
<dbReference type="InterPro" id="IPR039420">
    <property type="entry name" value="WalR-like"/>
</dbReference>
<dbReference type="InterPro" id="IPR036388">
    <property type="entry name" value="WH-like_DNA-bd_sf"/>
</dbReference>
<dbReference type="PANTHER" id="PTHR48111">
    <property type="entry name" value="REGULATOR OF RPOS"/>
    <property type="match status" value="1"/>
</dbReference>
<dbReference type="PANTHER" id="PTHR48111:SF27">
    <property type="entry name" value="SENSORY TRANSDUCTION PROTEIN BCER"/>
    <property type="match status" value="1"/>
</dbReference>
<dbReference type="Pfam" id="PF00072">
    <property type="entry name" value="Response_reg"/>
    <property type="match status" value="1"/>
</dbReference>
<dbReference type="Pfam" id="PF00486">
    <property type="entry name" value="Trans_reg_C"/>
    <property type="match status" value="1"/>
</dbReference>
<dbReference type="SMART" id="SM00448">
    <property type="entry name" value="REC"/>
    <property type="match status" value="1"/>
</dbReference>
<dbReference type="SMART" id="SM00862">
    <property type="entry name" value="Trans_reg_C"/>
    <property type="match status" value="1"/>
</dbReference>
<dbReference type="SUPFAM" id="SSF46894">
    <property type="entry name" value="C-terminal effector domain of the bipartite response regulators"/>
    <property type="match status" value="1"/>
</dbReference>
<dbReference type="SUPFAM" id="SSF52172">
    <property type="entry name" value="CheY-like"/>
    <property type="match status" value="1"/>
</dbReference>
<dbReference type="PROSITE" id="PS51755">
    <property type="entry name" value="OMPR_PHOB"/>
    <property type="match status" value="1"/>
</dbReference>
<dbReference type="PROSITE" id="PS50110">
    <property type="entry name" value="RESPONSE_REGULATORY"/>
    <property type="match status" value="1"/>
</dbReference>
<protein>
    <recommendedName>
        <fullName>Sensory transduction protein BceR</fullName>
    </recommendedName>
</protein>
<organism>
    <name type="scientific">Halalkalibacterium halodurans (strain ATCC BAA-125 / DSM 18197 / FERM 7344 / JCM 9153 / C-125)</name>
    <name type="common">Bacillus halodurans</name>
    <dbReference type="NCBI Taxonomy" id="272558"/>
    <lineage>
        <taxon>Bacteria</taxon>
        <taxon>Bacillati</taxon>
        <taxon>Bacillota</taxon>
        <taxon>Bacilli</taxon>
        <taxon>Bacillales</taxon>
        <taxon>Bacillaceae</taxon>
        <taxon>Halalkalibacterium (ex Joshi et al. 2022)</taxon>
    </lineage>
</organism>
<keyword id="KW-0963">Cytoplasm</keyword>
<keyword id="KW-0238">DNA-binding</keyword>
<keyword id="KW-0597">Phosphoprotein</keyword>
<keyword id="KW-1185">Reference proteome</keyword>
<keyword id="KW-0804">Transcription</keyword>
<keyword id="KW-0805">Transcription regulation</keyword>
<keyword id="KW-0902">Two-component regulatory system</keyword>
<name>BCER_HALH5</name>